<protein>
    <recommendedName>
        <fullName>Uncharacterized protein K02D10.3</fullName>
    </recommendedName>
</protein>
<name>YMQ3_CAEEL</name>
<feature type="chain" id="PRO_0000065398" description="Uncharacterized protein K02D10.3">
    <location>
        <begin position="1"/>
        <end position="105"/>
    </location>
</feature>
<feature type="region of interest" description="Disordered" evidence="1">
    <location>
        <begin position="31"/>
        <end position="80"/>
    </location>
</feature>
<feature type="compositionally biased region" description="Low complexity" evidence="1">
    <location>
        <begin position="31"/>
        <end position="47"/>
    </location>
</feature>
<feature type="compositionally biased region" description="Basic and acidic residues" evidence="1">
    <location>
        <begin position="54"/>
        <end position="66"/>
    </location>
</feature>
<accession>P34494</accession>
<gene>
    <name type="ORF">K02D10.3</name>
</gene>
<keyword id="KW-1185">Reference proteome</keyword>
<evidence type="ECO:0000256" key="1">
    <source>
        <dbReference type="SAM" id="MobiDB-lite"/>
    </source>
</evidence>
<dbReference type="EMBL" id="FO081469">
    <property type="protein sequence ID" value="CCD71828.1"/>
    <property type="molecule type" value="Genomic_DNA"/>
</dbReference>
<dbReference type="PIR" id="S44838">
    <property type="entry name" value="S44838"/>
</dbReference>
<dbReference type="RefSeq" id="NP_498938.1">
    <property type="nucleotide sequence ID" value="NM_066537.1"/>
</dbReference>
<dbReference type="PaxDb" id="6239-K02D10.3"/>
<dbReference type="EnsemblMetazoa" id="K02D10.3.1">
    <property type="protein sequence ID" value="K02D10.3.1"/>
    <property type="gene ID" value="WBGene00019303"/>
</dbReference>
<dbReference type="GeneID" id="186878"/>
<dbReference type="KEGG" id="cel:CELE_K02D10.3"/>
<dbReference type="UCSC" id="K02D10.3">
    <property type="organism name" value="c. elegans"/>
</dbReference>
<dbReference type="AGR" id="WB:WBGene00019303"/>
<dbReference type="CTD" id="186878"/>
<dbReference type="WormBase" id="K02D10.3">
    <property type="protein sequence ID" value="CE00243"/>
    <property type="gene ID" value="WBGene00019303"/>
</dbReference>
<dbReference type="HOGENOM" id="CLU_2239021_0_0_1"/>
<dbReference type="InParanoid" id="P34494"/>
<dbReference type="PRO" id="PR:P34494"/>
<dbReference type="Proteomes" id="UP000001940">
    <property type="component" value="Chromosome III"/>
</dbReference>
<dbReference type="Bgee" id="WBGene00019303">
    <property type="expression patterns" value="Expressed in pharyngeal muscle cell (C elegans) and 3 other cell types or tissues"/>
</dbReference>
<proteinExistence type="predicted"/>
<organism>
    <name type="scientific">Caenorhabditis elegans</name>
    <dbReference type="NCBI Taxonomy" id="6239"/>
    <lineage>
        <taxon>Eukaryota</taxon>
        <taxon>Metazoa</taxon>
        <taxon>Ecdysozoa</taxon>
        <taxon>Nematoda</taxon>
        <taxon>Chromadorea</taxon>
        <taxon>Rhabditida</taxon>
        <taxon>Rhabditina</taxon>
        <taxon>Rhabditomorpha</taxon>
        <taxon>Rhabditoidea</taxon>
        <taxon>Rhabditidae</taxon>
        <taxon>Peloderinae</taxon>
        <taxon>Caenorhabditis</taxon>
    </lineage>
</organism>
<sequence>MEEVGGNGGPARIAECGKIGSGTINSNVVPSVNLPSPSVKPSVTPSVKKPPHVIRSDYSKPREKPAKVAKKPTVKNDKKPKPVAIVAPTGIIKTFKTTPNPNRNL</sequence>
<reference key="1">
    <citation type="journal article" date="1994" name="Nature">
        <title>2.2 Mb of contiguous nucleotide sequence from chromosome III of C. elegans.</title>
        <authorList>
            <person name="Wilson R."/>
            <person name="Ainscough R."/>
            <person name="Anderson K."/>
            <person name="Baynes C."/>
            <person name="Berks M."/>
            <person name="Bonfield J."/>
            <person name="Burton J."/>
            <person name="Connell M."/>
            <person name="Copsey T."/>
            <person name="Cooper J."/>
            <person name="Coulson A."/>
            <person name="Craxton M."/>
            <person name="Dear S."/>
            <person name="Du Z."/>
            <person name="Durbin R."/>
            <person name="Favello A."/>
            <person name="Fraser A."/>
            <person name="Fulton L."/>
            <person name="Gardner A."/>
            <person name="Green P."/>
            <person name="Hawkins T."/>
            <person name="Hillier L."/>
            <person name="Jier M."/>
            <person name="Johnston L."/>
            <person name="Jones M."/>
            <person name="Kershaw J."/>
            <person name="Kirsten J."/>
            <person name="Laisster N."/>
            <person name="Latreille P."/>
            <person name="Lightning J."/>
            <person name="Lloyd C."/>
            <person name="Mortimore B."/>
            <person name="O'Callaghan M."/>
            <person name="Parsons J."/>
            <person name="Percy C."/>
            <person name="Rifken L."/>
            <person name="Roopra A."/>
            <person name="Saunders D."/>
            <person name="Shownkeen R."/>
            <person name="Sims M."/>
            <person name="Smaldon N."/>
            <person name="Smith A."/>
            <person name="Smith M."/>
            <person name="Sonnhammer E."/>
            <person name="Staden R."/>
            <person name="Sulston J."/>
            <person name="Thierry-Mieg J."/>
            <person name="Thomas K."/>
            <person name="Vaudin M."/>
            <person name="Vaughan K."/>
            <person name="Waterston R."/>
            <person name="Watson A."/>
            <person name="Weinstock L."/>
            <person name="Wilkinson-Sproat J."/>
            <person name="Wohldman P."/>
        </authorList>
    </citation>
    <scope>NUCLEOTIDE SEQUENCE [LARGE SCALE GENOMIC DNA]</scope>
    <source>
        <strain>Bristol N2</strain>
    </source>
</reference>
<reference key="2">
    <citation type="journal article" date="1998" name="Science">
        <title>Genome sequence of the nematode C. elegans: a platform for investigating biology.</title>
        <authorList>
            <consortium name="The C. elegans sequencing consortium"/>
        </authorList>
    </citation>
    <scope>NUCLEOTIDE SEQUENCE [LARGE SCALE GENOMIC DNA]</scope>
    <source>
        <strain>Bristol N2</strain>
    </source>
</reference>